<feature type="chain" id="PRO_0000214434" description="FAD assembly factor SdhE">
    <location>
        <begin position="1"/>
        <end position="107"/>
    </location>
</feature>
<name>SDHE_XANOR</name>
<reference key="1">
    <citation type="journal article" date="2005" name="Nucleic Acids Res.">
        <title>The genome sequence of Xanthomonas oryzae pathovar oryzae KACC10331, the bacterial blight pathogen of rice.</title>
        <authorList>
            <person name="Lee B.-M."/>
            <person name="Park Y.-J."/>
            <person name="Park D.-S."/>
            <person name="Kang H.-W."/>
            <person name="Kim J.-G."/>
            <person name="Song E.-S."/>
            <person name="Park I.-C."/>
            <person name="Yoon U.-H."/>
            <person name="Hahn J.-H."/>
            <person name="Koo B.-S."/>
            <person name="Lee G.-B."/>
            <person name="Kim H."/>
            <person name="Park H.-S."/>
            <person name="Yoon K.-O."/>
            <person name="Kim J.-H."/>
            <person name="Jung C.-H."/>
            <person name="Koh N.-H."/>
            <person name="Seo J.-S."/>
            <person name="Go S.-J."/>
        </authorList>
    </citation>
    <scope>NUCLEOTIDE SEQUENCE [LARGE SCALE GENOMIC DNA]</scope>
    <source>
        <strain>KACC10331 / KXO85</strain>
    </source>
</reference>
<keyword id="KW-0143">Chaperone</keyword>
<keyword id="KW-0963">Cytoplasm</keyword>
<keyword id="KW-1185">Reference proteome</keyword>
<proteinExistence type="inferred from homology"/>
<protein>
    <recommendedName>
        <fullName>FAD assembly factor SdhE</fullName>
    </recommendedName>
</protein>
<sequence>MQRHRPLGQVPLSFSARHTARWRDEMDEQTRLKKLRWRCRRGMRELDQLFGRYLDQRWAQAPDAERAVFLQLLDCEDDKLWRWFMGYEACPDVANAALIADIRALPA</sequence>
<accession>Q5H0G1</accession>
<dbReference type="EMBL" id="AE013598">
    <property type="protein sequence ID" value="AAW75560.1"/>
    <property type="molecule type" value="Genomic_DNA"/>
</dbReference>
<dbReference type="SMR" id="Q5H0G1"/>
<dbReference type="STRING" id="291331.XOO2306"/>
<dbReference type="KEGG" id="xoo:XOO2306"/>
<dbReference type="HOGENOM" id="CLU_103054_2_1_6"/>
<dbReference type="Proteomes" id="UP000006735">
    <property type="component" value="Chromosome"/>
</dbReference>
<dbReference type="GO" id="GO:0005737">
    <property type="term" value="C:cytoplasm"/>
    <property type="evidence" value="ECO:0007669"/>
    <property type="project" value="UniProtKB-SubCell"/>
</dbReference>
<dbReference type="GO" id="GO:0006105">
    <property type="term" value="P:succinate metabolic process"/>
    <property type="evidence" value="ECO:0007669"/>
    <property type="project" value="TreeGrafter"/>
</dbReference>
<dbReference type="Gene3D" id="1.10.150.250">
    <property type="entry name" value="Flavinator of succinate dehydrogenase"/>
    <property type="match status" value="1"/>
</dbReference>
<dbReference type="InterPro" id="IPR005631">
    <property type="entry name" value="SDH"/>
</dbReference>
<dbReference type="InterPro" id="IPR036714">
    <property type="entry name" value="SDH_sf"/>
</dbReference>
<dbReference type="InterPro" id="IPR050531">
    <property type="entry name" value="SdhE_FAD_assembly_factor"/>
</dbReference>
<dbReference type="PANTHER" id="PTHR39585">
    <property type="entry name" value="FAD ASSEMBLY FACTOR SDHE"/>
    <property type="match status" value="1"/>
</dbReference>
<dbReference type="PANTHER" id="PTHR39585:SF1">
    <property type="entry name" value="FAD ASSEMBLY FACTOR SDHE"/>
    <property type="match status" value="1"/>
</dbReference>
<dbReference type="Pfam" id="PF03937">
    <property type="entry name" value="Sdh5"/>
    <property type="match status" value="1"/>
</dbReference>
<dbReference type="SUPFAM" id="SSF109910">
    <property type="entry name" value="YgfY-like"/>
    <property type="match status" value="1"/>
</dbReference>
<evidence type="ECO:0000250" key="1">
    <source>
        <dbReference type="UniProtKB" id="G4V4G2"/>
    </source>
</evidence>
<evidence type="ECO:0000305" key="2"/>
<gene>
    <name type="primary">sdhE</name>
    <name type="ordered locus">XOO2306</name>
</gene>
<organism>
    <name type="scientific">Xanthomonas oryzae pv. oryzae (strain KACC10331 / KXO85)</name>
    <dbReference type="NCBI Taxonomy" id="291331"/>
    <lineage>
        <taxon>Bacteria</taxon>
        <taxon>Pseudomonadati</taxon>
        <taxon>Pseudomonadota</taxon>
        <taxon>Gammaproteobacteria</taxon>
        <taxon>Lysobacterales</taxon>
        <taxon>Lysobacteraceae</taxon>
        <taxon>Xanthomonas</taxon>
    </lineage>
</organism>
<comment type="function">
    <text evidence="1">An FAD assembly protein, which accelerates covalent attachment of the cofactor into other proteins. Plays an essential role in the assembly of succinate dehydrogenase (SDH, respiratory complex II), an enzyme complex that is a component of both the tricarboxylic acid cycle and the electron transport chain, and which couples the oxidation of succinate to fumarate with the reduction of ubiquinone (coenzyme Q) to ubiquinol. Required for flavinylation (covalent attachment of FAD) of the flavoprotein subunit SdhA of SDH and other flavinylated proteins as well.</text>
</comment>
<comment type="subcellular location">
    <subcellularLocation>
        <location evidence="1">Cytoplasm</location>
    </subcellularLocation>
</comment>
<comment type="similarity">
    <text evidence="2">Belongs to the SdhE FAD assembly factor family.</text>
</comment>